<feature type="chain" id="PRO_0000124353" description="Small ribosomal subunit protein uS7">
    <location>
        <begin position="1"/>
        <end position="156"/>
    </location>
</feature>
<gene>
    <name type="primary">rspG</name>
    <name type="ordered locus">SCO4660</name>
    <name type="ORF">SCD40A.06</name>
</gene>
<protein>
    <recommendedName>
        <fullName evidence="1">Small ribosomal subunit protein uS7</fullName>
    </recommendedName>
    <alternativeName>
        <fullName evidence="2">30S ribosomal protein S7</fullName>
    </alternativeName>
</protein>
<keyword id="KW-1185">Reference proteome</keyword>
<keyword id="KW-0687">Ribonucleoprotein</keyword>
<keyword id="KW-0689">Ribosomal protein</keyword>
<keyword id="KW-0694">RNA-binding</keyword>
<keyword id="KW-0699">rRNA-binding</keyword>
<keyword id="KW-0820">tRNA-binding</keyword>
<accession>Q9L0K4</accession>
<sequence>MPRKGPAPKRPVIIDPVYGSPLVTSLINKVLLNGKRSTAERIVYGAMEGLREKTGNDPVITLKRALENIKPTLEVKSRRVGGATYQVPIEVKPGRANTLALRWLVGYSRARREKTMTERLLNELLDASNGLGAAVKKREDTHKMAESNKAFAHYRW</sequence>
<reference key="1">
    <citation type="journal article" date="2002" name="Nature">
        <title>Complete genome sequence of the model actinomycete Streptomyces coelicolor A3(2).</title>
        <authorList>
            <person name="Bentley S.D."/>
            <person name="Chater K.F."/>
            <person name="Cerdeno-Tarraga A.-M."/>
            <person name="Challis G.L."/>
            <person name="Thomson N.R."/>
            <person name="James K.D."/>
            <person name="Harris D.E."/>
            <person name="Quail M.A."/>
            <person name="Kieser H."/>
            <person name="Harper D."/>
            <person name="Bateman A."/>
            <person name="Brown S."/>
            <person name="Chandra G."/>
            <person name="Chen C.W."/>
            <person name="Collins M."/>
            <person name="Cronin A."/>
            <person name="Fraser A."/>
            <person name="Goble A."/>
            <person name="Hidalgo J."/>
            <person name="Hornsby T."/>
            <person name="Howarth S."/>
            <person name="Huang C.-H."/>
            <person name="Kieser T."/>
            <person name="Larke L."/>
            <person name="Murphy L.D."/>
            <person name="Oliver K."/>
            <person name="O'Neil S."/>
            <person name="Rabbinowitsch E."/>
            <person name="Rajandream M.A."/>
            <person name="Rutherford K.M."/>
            <person name="Rutter S."/>
            <person name="Seeger K."/>
            <person name="Saunders D."/>
            <person name="Sharp S."/>
            <person name="Squares R."/>
            <person name="Squares S."/>
            <person name="Taylor K."/>
            <person name="Warren T."/>
            <person name="Wietzorrek A."/>
            <person name="Woodward J.R."/>
            <person name="Barrell B.G."/>
            <person name="Parkhill J."/>
            <person name="Hopwood D.A."/>
        </authorList>
    </citation>
    <scope>NUCLEOTIDE SEQUENCE [LARGE SCALE GENOMIC DNA]</scope>
    <source>
        <strain>ATCC BAA-471 / A3(2) / M145</strain>
    </source>
</reference>
<dbReference type="EMBL" id="AL939121">
    <property type="protein sequence ID" value="CAB81851.1"/>
    <property type="molecule type" value="Genomic_DNA"/>
</dbReference>
<dbReference type="RefSeq" id="NP_628820.1">
    <property type="nucleotide sequence ID" value="NC_003888.3"/>
</dbReference>
<dbReference type="SMR" id="Q9L0K4"/>
<dbReference type="FunCoup" id="Q9L0K4">
    <property type="interactions" value="413"/>
</dbReference>
<dbReference type="STRING" id="100226.gene:17762309"/>
<dbReference type="PaxDb" id="100226-SCO4660"/>
<dbReference type="KEGG" id="sco:SCO4660"/>
<dbReference type="PATRIC" id="fig|100226.15.peg.4731"/>
<dbReference type="eggNOG" id="COG0049">
    <property type="taxonomic scope" value="Bacteria"/>
</dbReference>
<dbReference type="HOGENOM" id="CLU_072226_1_1_11"/>
<dbReference type="InParanoid" id="Q9L0K4"/>
<dbReference type="OrthoDB" id="9807653at2"/>
<dbReference type="PhylomeDB" id="Q9L0K4"/>
<dbReference type="Proteomes" id="UP000001973">
    <property type="component" value="Chromosome"/>
</dbReference>
<dbReference type="GO" id="GO:0022627">
    <property type="term" value="C:cytosolic small ribosomal subunit"/>
    <property type="evidence" value="ECO:0000318"/>
    <property type="project" value="GO_Central"/>
</dbReference>
<dbReference type="GO" id="GO:0005840">
    <property type="term" value="C:ribosome"/>
    <property type="evidence" value="ECO:0000318"/>
    <property type="project" value="GO_Central"/>
</dbReference>
<dbReference type="GO" id="GO:0003729">
    <property type="term" value="F:mRNA binding"/>
    <property type="evidence" value="ECO:0000318"/>
    <property type="project" value="GO_Central"/>
</dbReference>
<dbReference type="GO" id="GO:0019843">
    <property type="term" value="F:rRNA binding"/>
    <property type="evidence" value="ECO:0000318"/>
    <property type="project" value="GO_Central"/>
</dbReference>
<dbReference type="GO" id="GO:0003735">
    <property type="term" value="F:structural constituent of ribosome"/>
    <property type="evidence" value="ECO:0000318"/>
    <property type="project" value="GO_Central"/>
</dbReference>
<dbReference type="GO" id="GO:0000049">
    <property type="term" value="F:tRNA binding"/>
    <property type="evidence" value="ECO:0007669"/>
    <property type="project" value="UniProtKB-UniRule"/>
</dbReference>
<dbReference type="GO" id="GO:0000028">
    <property type="term" value="P:ribosomal small subunit assembly"/>
    <property type="evidence" value="ECO:0000318"/>
    <property type="project" value="GO_Central"/>
</dbReference>
<dbReference type="GO" id="GO:0006412">
    <property type="term" value="P:translation"/>
    <property type="evidence" value="ECO:0000318"/>
    <property type="project" value="GO_Central"/>
</dbReference>
<dbReference type="CDD" id="cd14869">
    <property type="entry name" value="uS7_Bacteria"/>
    <property type="match status" value="1"/>
</dbReference>
<dbReference type="FunFam" id="1.10.455.10:FF:000001">
    <property type="entry name" value="30S ribosomal protein S7"/>
    <property type="match status" value="1"/>
</dbReference>
<dbReference type="Gene3D" id="1.10.455.10">
    <property type="entry name" value="Ribosomal protein S7 domain"/>
    <property type="match status" value="1"/>
</dbReference>
<dbReference type="HAMAP" id="MF_00480_B">
    <property type="entry name" value="Ribosomal_uS7_B"/>
    <property type="match status" value="1"/>
</dbReference>
<dbReference type="InterPro" id="IPR000235">
    <property type="entry name" value="Ribosomal_uS7"/>
</dbReference>
<dbReference type="InterPro" id="IPR005717">
    <property type="entry name" value="Ribosomal_uS7_bac/org-type"/>
</dbReference>
<dbReference type="InterPro" id="IPR020606">
    <property type="entry name" value="Ribosomal_uS7_CS"/>
</dbReference>
<dbReference type="InterPro" id="IPR023798">
    <property type="entry name" value="Ribosomal_uS7_dom"/>
</dbReference>
<dbReference type="InterPro" id="IPR036823">
    <property type="entry name" value="Ribosomal_uS7_dom_sf"/>
</dbReference>
<dbReference type="NCBIfam" id="TIGR01029">
    <property type="entry name" value="rpsG_bact"/>
    <property type="match status" value="1"/>
</dbReference>
<dbReference type="PANTHER" id="PTHR11205">
    <property type="entry name" value="RIBOSOMAL PROTEIN S7"/>
    <property type="match status" value="1"/>
</dbReference>
<dbReference type="Pfam" id="PF00177">
    <property type="entry name" value="Ribosomal_S7"/>
    <property type="match status" value="1"/>
</dbReference>
<dbReference type="PIRSF" id="PIRSF002122">
    <property type="entry name" value="RPS7p_RPS7a_RPS5e_RPS7o"/>
    <property type="match status" value="1"/>
</dbReference>
<dbReference type="SUPFAM" id="SSF47973">
    <property type="entry name" value="Ribosomal protein S7"/>
    <property type="match status" value="1"/>
</dbReference>
<dbReference type="PROSITE" id="PS00052">
    <property type="entry name" value="RIBOSOMAL_S7"/>
    <property type="match status" value="1"/>
</dbReference>
<comment type="function">
    <text evidence="1">One of the primary rRNA binding proteins, it binds directly to 16S rRNA where it nucleates assembly of the head domain of the 30S subunit. Is located at the subunit interface close to the decoding center, probably blocks exit of the E-site tRNA.</text>
</comment>
<comment type="subunit">
    <text evidence="1">Part of the 30S ribosomal subunit. Contacts proteins S9 and S11.</text>
</comment>
<comment type="similarity">
    <text evidence="1">Belongs to the universal ribosomal protein uS7 family.</text>
</comment>
<name>RS7_STRCO</name>
<proteinExistence type="inferred from homology"/>
<organism>
    <name type="scientific">Streptomyces coelicolor (strain ATCC BAA-471 / A3(2) / M145)</name>
    <dbReference type="NCBI Taxonomy" id="100226"/>
    <lineage>
        <taxon>Bacteria</taxon>
        <taxon>Bacillati</taxon>
        <taxon>Actinomycetota</taxon>
        <taxon>Actinomycetes</taxon>
        <taxon>Kitasatosporales</taxon>
        <taxon>Streptomycetaceae</taxon>
        <taxon>Streptomyces</taxon>
        <taxon>Streptomyces albidoflavus group</taxon>
    </lineage>
</organism>
<evidence type="ECO:0000255" key="1">
    <source>
        <dbReference type="HAMAP-Rule" id="MF_00480"/>
    </source>
</evidence>
<evidence type="ECO:0000305" key="2"/>